<name>CD050_HUMAN</name>
<accession>Q6ZRC1</accession>
<accession>E9PNW5</accession>
<comment type="sequence caution" evidence="4">
    <conflict type="erroneous initiation">
        <sequence resource="EMBL-CDS" id="BAC87391"/>
    </conflict>
    <text>Truncated N-terminus.</text>
</comment>
<feature type="chain" id="PRO_0000329449" description="Uncharacterized protein C4orf50">
    <location>
        <begin position="1"/>
        <end position="1508"/>
    </location>
</feature>
<feature type="region of interest" description="Disordered" evidence="2">
    <location>
        <begin position="248"/>
        <end position="268"/>
    </location>
</feature>
<feature type="region of interest" description="Disordered" evidence="2">
    <location>
        <begin position="345"/>
        <end position="403"/>
    </location>
</feature>
<feature type="region of interest" description="Disordered" evidence="2">
    <location>
        <begin position="536"/>
        <end position="575"/>
    </location>
</feature>
<feature type="region of interest" description="Disordered" evidence="2">
    <location>
        <begin position="725"/>
        <end position="754"/>
    </location>
</feature>
<feature type="region of interest" description="Disordered" evidence="2">
    <location>
        <begin position="868"/>
        <end position="916"/>
    </location>
</feature>
<feature type="region of interest" description="Disordered" evidence="2">
    <location>
        <begin position="1158"/>
        <end position="1186"/>
    </location>
</feature>
<feature type="region of interest" description="Disordered" evidence="2">
    <location>
        <begin position="1204"/>
        <end position="1246"/>
    </location>
</feature>
<feature type="coiled-coil region" evidence="1">
    <location>
        <begin position="149"/>
        <end position="267"/>
    </location>
</feature>
<feature type="coiled-coil region" evidence="1">
    <location>
        <begin position="972"/>
        <end position="1034"/>
    </location>
</feature>
<feature type="coiled-coil region" evidence="1">
    <location>
        <begin position="1271"/>
        <end position="1302"/>
    </location>
</feature>
<feature type="compositionally biased region" description="Basic and acidic residues" evidence="2">
    <location>
        <begin position="868"/>
        <end position="881"/>
    </location>
</feature>
<feature type="compositionally biased region" description="Polar residues" evidence="2">
    <location>
        <begin position="1163"/>
        <end position="1172"/>
    </location>
</feature>
<feature type="compositionally biased region" description="Basic and acidic residues" evidence="2">
    <location>
        <begin position="1204"/>
        <end position="1215"/>
    </location>
</feature>
<feature type="compositionally biased region" description="Polar residues" evidence="2">
    <location>
        <begin position="1220"/>
        <end position="1230"/>
    </location>
</feature>
<feature type="sequence variant" id="VAR_042680" description="In dbSNP:rs16837960.">
    <original>R</original>
    <variation>W</variation>
    <location>
        <position position="1318"/>
    </location>
</feature>
<feature type="sequence variant" id="VAR_042681" description="In a breast cancer sample; somatic mutation." evidence="3">
    <original>A</original>
    <variation>P</variation>
    <location>
        <position position="1382"/>
    </location>
</feature>
<feature type="sequence variant" id="VAR_042682" description="In dbSNP:rs6839295.">
    <original>I</original>
    <variation>V</variation>
    <location>
        <position position="1409"/>
    </location>
</feature>
<feature type="sequence variant" id="VAR_042683" description="In dbSNP:rs7695618.">
    <original>V</original>
    <variation>M</variation>
    <location>
        <position position="1431"/>
    </location>
</feature>
<protein>
    <recommendedName>
        <fullName>Uncharacterized protein C4orf50</fullName>
    </recommendedName>
</protein>
<gene>
    <name type="primary">C4orf50</name>
</gene>
<proteinExistence type="evidence at transcript level"/>
<sequence>MEPTAKGRTEESFSYVIRAPSSEGFDIMNVDVKIDTSWIFQDMEDSAEERECLQEEAAGRPDMDMGALRRQLESSEQKLSAAEDKYVTSESGLRSRIQELELSERKLLRKVDQLSTHVAQERSAWLQAQEKLAALQGELASQIREESVARRQQWRLRRLQERLRRKDEALGQQAAALERCRRTQRRQLGLVREQERVLREQVQRLERNVRRLCRAAGLLLAQWDTAAPGSQGATEAAAELRALQARAERSEREREEAARSLQEHRATERQLRGQLEELRCCIYGLKLSEIGLQGQVEDLAQQNQCLREELGAQAPIGHCSLDALGCVQGDSLPLPREEALDPCRSQDWRNSLRSNDAPRQRAPAGQSPEGPCTWSRIRPGRASSVLAPGPETTSELPRDLAGSNREQLTLAEPSLDEQILLLVCGCPPEECLDESLLRMDLAWISENLAADPAAEAFLLVQTSALPLWGPAGDSASWRPLLLQEVPSDGQKIQEELATRSPPPPKATGHPGWDCHQTRGRGASLFHEAPYISNHPFLKKHPKDLKDTWNNGGGSLAGRTEEGKARGTLGRKGKNLGDKYQLSQESHQNLSLENGAGAAEDVQDQNGASETKAATCRPGSWQEFLMPLLQGEASVSKEGPESLSRRERVEGYVWGLRGGLSSENEEVAPPATFSRAHETKEPWPTDSQLLAGKVRATGRTARGKEENQVWLGNALLLQGGSLEDKGLEEEDEMPHQEASGLGCRGAPEEPDSQEHESKEMLFFAGETGLPLFPRFALSVEGAEPTDHGHPQAVSKGHNRCALTIDELAQDVEACFQQLSTLQPGSRGWQCSASACRGENWSFAQKWHSGWERAHSQQVWGNWGICSNEEAKSKESGEGDKPGKTTALGTSEVPGNPGTLPHWDEASPNPPQGPAEPWGALERVRSRFHQLISGLKKQRSQILHDNTKLHGDQERFHERVCALEREREREVTKISRLERDNHRLVGDISQLKKELDQYLQAISDLEDCNGKSYCKILELEEENETLKGNLGQLQKATSESVRKSKDTMEQVTLENWKLQTLISELGVSYKELIKDIVLGIEDMIRALSGENEHLLRRVHVLEREVTLQRSTDQGRLVRGREHLQGKAKMHALDKEVQVTPLTGQLLSRACGPPLEEEMSLAAGQTGPSTGTGNSRRGADSPPPSLVWRNTGVANALQGNVSGAEVKEAHLEKEEKRPRCSVAQGQALSSLSNGPMLRDSEAEVTEEDPRLRAQQLHHRVLTLQCQLRDQGAAHQASLDEATRLQEELQAKLEELQKKQHEAKLAVTPLKAKIASLVRKCRERNRLITHLLQELHRHGLGNLLLSELAQNMLNDVALAEYTATFLAPGVPETSHHLDVKSEMTAALRAQTYLLNPEMDSVLQSSLSSESWPIPEPEWPAQTAQLDSLKLPLSLVSTLDPGTCLAAVTVEPGLPAQRLQEKGGMPCPALQVDNVPAPSELLSPARILAFHQELRQSICSNSQVHKSPLELEM</sequence>
<evidence type="ECO:0000255" key="1"/>
<evidence type="ECO:0000256" key="2">
    <source>
        <dbReference type="SAM" id="MobiDB-lite"/>
    </source>
</evidence>
<evidence type="ECO:0000269" key="3">
    <source>
    </source>
</evidence>
<evidence type="ECO:0000305" key="4"/>
<organism>
    <name type="scientific">Homo sapiens</name>
    <name type="common">Human</name>
    <dbReference type="NCBI Taxonomy" id="9606"/>
    <lineage>
        <taxon>Eukaryota</taxon>
        <taxon>Metazoa</taxon>
        <taxon>Chordata</taxon>
        <taxon>Craniata</taxon>
        <taxon>Vertebrata</taxon>
        <taxon>Euteleostomi</taxon>
        <taxon>Mammalia</taxon>
        <taxon>Eutheria</taxon>
        <taxon>Euarchontoglires</taxon>
        <taxon>Primates</taxon>
        <taxon>Haplorrhini</taxon>
        <taxon>Catarrhini</taxon>
        <taxon>Hominidae</taxon>
        <taxon>Homo</taxon>
    </lineage>
</organism>
<dbReference type="EMBL" id="AC105915">
    <property type="status" value="NOT_ANNOTATED_CDS"/>
    <property type="molecule type" value="Genomic_DNA"/>
</dbReference>
<dbReference type="EMBL" id="AC109593">
    <property type="status" value="NOT_ANNOTATED_CDS"/>
    <property type="molecule type" value="Genomic_DNA"/>
</dbReference>
<dbReference type="EMBL" id="AC113615">
    <property type="status" value="NOT_ANNOTATED_CDS"/>
    <property type="molecule type" value="Genomic_DNA"/>
</dbReference>
<dbReference type="EMBL" id="AC092442">
    <property type="status" value="NOT_ANNOTATED_CDS"/>
    <property type="molecule type" value="Genomic_DNA"/>
</dbReference>
<dbReference type="EMBL" id="AK128339">
    <property type="protein sequence ID" value="BAC87391.1"/>
    <property type="status" value="ALT_INIT"/>
    <property type="molecule type" value="mRNA"/>
</dbReference>
<dbReference type="CCDS" id="CCDS93473.1"/>
<dbReference type="RefSeq" id="NP_001351618.1">
    <property type="nucleotide sequence ID" value="NM_001364689.3"/>
</dbReference>
<dbReference type="RefSeq" id="XP_047271619.1">
    <property type="nucleotide sequence ID" value="XM_047415663.1"/>
</dbReference>
<dbReference type="RefSeq" id="XP_047271620.1">
    <property type="nucleotide sequence ID" value="XM_047415664.1"/>
</dbReference>
<dbReference type="SMR" id="Q6ZRC1"/>
<dbReference type="IntAct" id="Q6ZRC1">
    <property type="interactions" value="1"/>
</dbReference>
<dbReference type="iPTMnet" id="Q6ZRC1"/>
<dbReference type="PhosphoSitePlus" id="Q6ZRC1"/>
<dbReference type="BioMuta" id="C4orf50"/>
<dbReference type="DMDM" id="74711113"/>
<dbReference type="MassIVE" id="E9PNW5"/>
<dbReference type="PaxDb" id="9606-ENSP00000437121"/>
<dbReference type="PeptideAtlas" id="Q6ZRC1"/>
<dbReference type="Antibodypedia" id="71691">
    <property type="antibodies" value="9 antibodies from 7 providers"/>
</dbReference>
<dbReference type="Ensembl" id="ENST00000531445.3">
    <property type="protein sequence ID" value="ENSP00000437121.2"/>
    <property type="gene ID" value="ENSG00000181215.17"/>
</dbReference>
<dbReference type="Ensembl" id="ENST00000711657.1">
    <property type="protein sequence ID" value="ENSP00000518823.1"/>
    <property type="gene ID" value="ENSG00000181215.17"/>
</dbReference>
<dbReference type="GeneID" id="389197"/>
<dbReference type="MANE-Select" id="ENST00000711657.1">
    <property type="protein sequence ID" value="ENSP00000518823.1"/>
    <property type="RefSeq nucleotide sequence ID" value="NM_001364689.3"/>
    <property type="RefSeq protein sequence ID" value="NP_001351618.1"/>
</dbReference>
<dbReference type="UCSC" id="uc062uxv.1">
    <property type="organism name" value="human"/>
</dbReference>
<dbReference type="AGR" id="HGNC:33766"/>
<dbReference type="GeneCards" id="C4orf50"/>
<dbReference type="HGNC" id="HGNC:33766">
    <property type="gene designation" value="C4orf50"/>
</dbReference>
<dbReference type="neXtProt" id="NX_Q6ZRC1"/>
<dbReference type="OpenTargets" id="ENSG00000181215"/>
<dbReference type="VEuPathDB" id="HostDB:ENSG00000181215"/>
<dbReference type="eggNOG" id="ENOG502S96Q">
    <property type="taxonomic scope" value="Eukaryota"/>
</dbReference>
<dbReference type="GeneTree" id="ENSGT00390000003220"/>
<dbReference type="HOGENOM" id="CLU_1024990_0_0_1"/>
<dbReference type="InParanoid" id="Q6ZRC1"/>
<dbReference type="OMA" id="EGPCTWS"/>
<dbReference type="OrthoDB" id="4158657at2759"/>
<dbReference type="PAN-GO" id="Q6ZRC1">
    <property type="GO annotations" value="0 GO annotations based on evolutionary models"/>
</dbReference>
<dbReference type="PhylomeDB" id="Q6ZRC1"/>
<dbReference type="TreeFam" id="TF353371"/>
<dbReference type="PathwayCommons" id="Q6ZRC1"/>
<dbReference type="SignaLink" id="Q6ZRC1"/>
<dbReference type="ChiTaRS" id="C4orf50">
    <property type="organism name" value="human"/>
</dbReference>
<dbReference type="Pharos" id="Q6ZRC1">
    <property type="development level" value="Tdark"/>
</dbReference>
<dbReference type="PRO" id="PR:Q6ZRC1"/>
<dbReference type="Proteomes" id="UP000005640">
    <property type="component" value="Chromosome 4"/>
</dbReference>
<dbReference type="RNAct" id="Q6ZRC1">
    <property type="molecule type" value="protein"/>
</dbReference>
<dbReference type="Bgee" id="ENSG00000181215">
    <property type="expression patterns" value="Expressed in nucleus accumbens and 34 other cell types or tissues"/>
</dbReference>
<dbReference type="ExpressionAtlas" id="Q6ZRC1">
    <property type="expression patterns" value="baseline and differential"/>
</dbReference>
<dbReference type="InterPro" id="IPR032771">
    <property type="entry name" value="DUF4527"/>
</dbReference>
<dbReference type="PANTHER" id="PTHR36866">
    <property type="entry name" value="CHROMOSOME 4 OPEN READING FRAME 50"/>
    <property type="match status" value="1"/>
</dbReference>
<dbReference type="PANTHER" id="PTHR36866:SF1">
    <property type="entry name" value="GENE 1043-RELATED"/>
    <property type="match status" value="1"/>
</dbReference>
<dbReference type="Pfam" id="PF15030">
    <property type="entry name" value="DUF4527"/>
    <property type="match status" value="1"/>
</dbReference>
<keyword id="KW-0175">Coiled coil</keyword>
<keyword id="KW-1185">Reference proteome</keyword>
<reference key="1">
    <citation type="journal article" date="2005" name="Nature">
        <title>Generation and annotation of the DNA sequences of human chromosomes 2 and 4.</title>
        <authorList>
            <person name="Hillier L.W."/>
            <person name="Graves T.A."/>
            <person name="Fulton R.S."/>
            <person name="Fulton L.A."/>
            <person name="Pepin K.H."/>
            <person name="Minx P."/>
            <person name="Wagner-McPherson C."/>
            <person name="Layman D."/>
            <person name="Wylie K."/>
            <person name="Sekhon M."/>
            <person name="Becker M.C."/>
            <person name="Fewell G.A."/>
            <person name="Delehaunty K.D."/>
            <person name="Miner T.L."/>
            <person name="Nash W.E."/>
            <person name="Kremitzki C."/>
            <person name="Oddy L."/>
            <person name="Du H."/>
            <person name="Sun H."/>
            <person name="Bradshaw-Cordum H."/>
            <person name="Ali J."/>
            <person name="Carter J."/>
            <person name="Cordes M."/>
            <person name="Harris A."/>
            <person name="Isak A."/>
            <person name="van Brunt A."/>
            <person name="Nguyen C."/>
            <person name="Du F."/>
            <person name="Courtney L."/>
            <person name="Kalicki J."/>
            <person name="Ozersky P."/>
            <person name="Abbott S."/>
            <person name="Armstrong J."/>
            <person name="Belter E.A."/>
            <person name="Caruso L."/>
            <person name="Cedroni M."/>
            <person name="Cotton M."/>
            <person name="Davidson T."/>
            <person name="Desai A."/>
            <person name="Elliott G."/>
            <person name="Erb T."/>
            <person name="Fronick C."/>
            <person name="Gaige T."/>
            <person name="Haakenson W."/>
            <person name="Haglund K."/>
            <person name="Holmes A."/>
            <person name="Harkins R."/>
            <person name="Kim K."/>
            <person name="Kruchowski S.S."/>
            <person name="Strong C.M."/>
            <person name="Grewal N."/>
            <person name="Goyea E."/>
            <person name="Hou S."/>
            <person name="Levy A."/>
            <person name="Martinka S."/>
            <person name="Mead K."/>
            <person name="McLellan M.D."/>
            <person name="Meyer R."/>
            <person name="Randall-Maher J."/>
            <person name="Tomlinson C."/>
            <person name="Dauphin-Kohlberg S."/>
            <person name="Kozlowicz-Reilly A."/>
            <person name="Shah N."/>
            <person name="Swearengen-Shahid S."/>
            <person name="Snider J."/>
            <person name="Strong J.T."/>
            <person name="Thompson J."/>
            <person name="Yoakum M."/>
            <person name="Leonard S."/>
            <person name="Pearman C."/>
            <person name="Trani L."/>
            <person name="Radionenko M."/>
            <person name="Waligorski J.E."/>
            <person name="Wang C."/>
            <person name="Rock S.M."/>
            <person name="Tin-Wollam A.-M."/>
            <person name="Maupin R."/>
            <person name="Latreille P."/>
            <person name="Wendl M.C."/>
            <person name="Yang S.-P."/>
            <person name="Pohl C."/>
            <person name="Wallis J.W."/>
            <person name="Spieth J."/>
            <person name="Bieri T.A."/>
            <person name="Berkowicz N."/>
            <person name="Nelson J.O."/>
            <person name="Osborne J."/>
            <person name="Ding L."/>
            <person name="Meyer R."/>
            <person name="Sabo A."/>
            <person name="Shotland Y."/>
            <person name="Sinha P."/>
            <person name="Wohldmann P.E."/>
            <person name="Cook L.L."/>
            <person name="Hickenbotham M.T."/>
            <person name="Eldred J."/>
            <person name="Williams D."/>
            <person name="Jones T.A."/>
            <person name="She X."/>
            <person name="Ciccarelli F.D."/>
            <person name="Izaurralde E."/>
            <person name="Taylor J."/>
            <person name="Schmutz J."/>
            <person name="Myers R.M."/>
            <person name="Cox D.R."/>
            <person name="Huang X."/>
            <person name="McPherson J.D."/>
            <person name="Mardis E.R."/>
            <person name="Clifton S.W."/>
            <person name="Warren W.C."/>
            <person name="Chinwalla A.T."/>
            <person name="Eddy S.R."/>
            <person name="Marra M.A."/>
            <person name="Ovcharenko I."/>
            <person name="Furey T.S."/>
            <person name="Miller W."/>
            <person name="Eichler E.E."/>
            <person name="Bork P."/>
            <person name="Suyama M."/>
            <person name="Torrents D."/>
            <person name="Waterston R.H."/>
            <person name="Wilson R.K."/>
        </authorList>
    </citation>
    <scope>NUCLEOTIDE SEQUENCE [LARGE SCALE GENOMIC DNA]</scope>
</reference>
<reference key="2">
    <citation type="journal article" date="2004" name="Nat. Genet.">
        <title>Complete sequencing and characterization of 21,243 full-length human cDNAs.</title>
        <authorList>
            <person name="Ota T."/>
            <person name="Suzuki Y."/>
            <person name="Nishikawa T."/>
            <person name="Otsuki T."/>
            <person name="Sugiyama T."/>
            <person name="Irie R."/>
            <person name="Wakamatsu A."/>
            <person name="Hayashi K."/>
            <person name="Sato H."/>
            <person name="Nagai K."/>
            <person name="Kimura K."/>
            <person name="Makita H."/>
            <person name="Sekine M."/>
            <person name="Obayashi M."/>
            <person name="Nishi T."/>
            <person name="Shibahara T."/>
            <person name="Tanaka T."/>
            <person name="Ishii S."/>
            <person name="Yamamoto J."/>
            <person name="Saito K."/>
            <person name="Kawai Y."/>
            <person name="Isono Y."/>
            <person name="Nakamura Y."/>
            <person name="Nagahari K."/>
            <person name="Murakami K."/>
            <person name="Yasuda T."/>
            <person name="Iwayanagi T."/>
            <person name="Wagatsuma M."/>
            <person name="Shiratori A."/>
            <person name="Sudo H."/>
            <person name="Hosoiri T."/>
            <person name="Kaku Y."/>
            <person name="Kodaira H."/>
            <person name="Kondo H."/>
            <person name="Sugawara M."/>
            <person name="Takahashi M."/>
            <person name="Kanda K."/>
            <person name="Yokoi T."/>
            <person name="Furuya T."/>
            <person name="Kikkawa E."/>
            <person name="Omura Y."/>
            <person name="Abe K."/>
            <person name="Kamihara K."/>
            <person name="Katsuta N."/>
            <person name="Sato K."/>
            <person name="Tanikawa M."/>
            <person name="Yamazaki M."/>
            <person name="Ninomiya K."/>
            <person name="Ishibashi T."/>
            <person name="Yamashita H."/>
            <person name="Murakawa K."/>
            <person name="Fujimori K."/>
            <person name="Tanai H."/>
            <person name="Kimata M."/>
            <person name="Watanabe M."/>
            <person name="Hiraoka S."/>
            <person name="Chiba Y."/>
            <person name="Ishida S."/>
            <person name="Ono Y."/>
            <person name="Takiguchi S."/>
            <person name="Watanabe S."/>
            <person name="Yosida M."/>
            <person name="Hotuta T."/>
            <person name="Kusano J."/>
            <person name="Kanehori K."/>
            <person name="Takahashi-Fujii A."/>
            <person name="Hara H."/>
            <person name="Tanase T.-O."/>
            <person name="Nomura Y."/>
            <person name="Togiya S."/>
            <person name="Komai F."/>
            <person name="Hara R."/>
            <person name="Takeuchi K."/>
            <person name="Arita M."/>
            <person name="Imose N."/>
            <person name="Musashino K."/>
            <person name="Yuuki H."/>
            <person name="Oshima A."/>
            <person name="Sasaki N."/>
            <person name="Aotsuka S."/>
            <person name="Yoshikawa Y."/>
            <person name="Matsunawa H."/>
            <person name="Ichihara T."/>
            <person name="Shiohata N."/>
            <person name="Sano S."/>
            <person name="Moriya S."/>
            <person name="Momiyama H."/>
            <person name="Satoh N."/>
            <person name="Takami S."/>
            <person name="Terashima Y."/>
            <person name="Suzuki O."/>
            <person name="Nakagawa S."/>
            <person name="Senoh A."/>
            <person name="Mizoguchi H."/>
            <person name="Goto Y."/>
            <person name="Shimizu F."/>
            <person name="Wakebe H."/>
            <person name="Hishigaki H."/>
            <person name="Watanabe T."/>
            <person name="Sugiyama A."/>
            <person name="Takemoto M."/>
            <person name="Kawakami B."/>
            <person name="Yamazaki M."/>
            <person name="Watanabe K."/>
            <person name="Kumagai A."/>
            <person name="Itakura S."/>
            <person name="Fukuzumi Y."/>
            <person name="Fujimori Y."/>
            <person name="Komiyama M."/>
            <person name="Tashiro H."/>
            <person name="Tanigami A."/>
            <person name="Fujiwara T."/>
            <person name="Ono T."/>
            <person name="Yamada K."/>
            <person name="Fujii Y."/>
            <person name="Ozaki K."/>
            <person name="Hirao M."/>
            <person name="Ohmori Y."/>
            <person name="Kawabata A."/>
            <person name="Hikiji T."/>
            <person name="Kobatake N."/>
            <person name="Inagaki H."/>
            <person name="Ikema Y."/>
            <person name="Okamoto S."/>
            <person name="Okitani R."/>
            <person name="Kawakami T."/>
            <person name="Noguchi S."/>
            <person name="Itoh T."/>
            <person name="Shigeta K."/>
            <person name="Senba T."/>
            <person name="Matsumura K."/>
            <person name="Nakajima Y."/>
            <person name="Mizuno T."/>
            <person name="Morinaga M."/>
            <person name="Sasaki M."/>
            <person name="Togashi T."/>
            <person name="Oyama M."/>
            <person name="Hata H."/>
            <person name="Watanabe M."/>
            <person name="Komatsu T."/>
            <person name="Mizushima-Sugano J."/>
            <person name="Satoh T."/>
            <person name="Shirai Y."/>
            <person name="Takahashi Y."/>
            <person name="Nakagawa K."/>
            <person name="Okumura K."/>
            <person name="Nagase T."/>
            <person name="Nomura N."/>
            <person name="Kikuchi H."/>
            <person name="Masuho Y."/>
            <person name="Yamashita R."/>
            <person name="Nakai K."/>
            <person name="Yada T."/>
            <person name="Nakamura Y."/>
            <person name="Ohara O."/>
            <person name="Isogai T."/>
            <person name="Sugano S."/>
        </authorList>
    </citation>
    <scope>NUCLEOTIDE SEQUENCE [LARGE SCALE MRNA] OF 1203-1508</scope>
    <source>
        <tissue>Thymus</tissue>
    </source>
</reference>
<reference key="3">
    <citation type="journal article" date="2006" name="Science">
        <title>The consensus coding sequences of human breast and colorectal cancers.</title>
        <authorList>
            <person name="Sjoeblom T."/>
            <person name="Jones S."/>
            <person name="Wood L.D."/>
            <person name="Parsons D.W."/>
            <person name="Lin J."/>
            <person name="Barber T.D."/>
            <person name="Mandelker D."/>
            <person name="Leary R.J."/>
            <person name="Ptak J."/>
            <person name="Silliman N."/>
            <person name="Szabo S."/>
            <person name="Buckhaults P."/>
            <person name="Farrell C."/>
            <person name="Meeh P."/>
            <person name="Markowitz S.D."/>
            <person name="Willis J."/>
            <person name="Dawson D."/>
            <person name="Willson J.K.V."/>
            <person name="Gazdar A.F."/>
            <person name="Hartigan J."/>
            <person name="Wu L."/>
            <person name="Liu C."/>
            <person name="Parmigiani G."/>
            <person name="Park B.H."/>
            <person name="Bachman K.E."/>
            <person name="Papadopoulos N."/>
            <person name="Vogelstein B."/>
            <person name="Kinzler K.W."/>
            <person name="Velculescu V.E."/>
        </authorList>
    </citation>
    <scope>VARIANT [LARGE SCALE ANALYSIS] PRO-1382</scope>
</reference>